<evidence type="ECO:0000255" key="1">
    <source>
        <dbReference type="HAMAP-Rule" id="MF_00236"/>
    </source>
</evidence>
<evidence type="ECO:0000256" key="2">
    <source>
        <dbReference type="SAM" id="MobiDB-lite"/>
    </source>
</evidence>
<dbReference type="EMBL" id="CP000447">
    <property type="protein sequence ID" value="ABI70334.1"/>
    <property type="molecule type" value="Genomic_DNA"/>
</dbReference>
<dbReference type="RefSeq" id="WP_011635961.1">
    <property type="nucleotide sequence ID" value="NC_008345.1"/>
</dbReference>
<dbReference type="SMR" id="Q088I1"/>
<dbReference type="STRING" id="318167.Sfri_0472"/>
<dbReference type="KEGG" id="sfr:Sfri_0472"/>
<dbReference type="eggNOG" id="COG1826">
    <property type="taxonomic scope" value="Bacteria"/>
</dbReference>
<dbReference type="HOGENOM" id="CLU_086034_5_1_6"/>
<dbReference type="OrthoDB" id="7066617at2"/>
<dbReference type="Proteomes" id="UP000000684">
    <property type="component" value="Chromosome"/>
</dbReference>
<dbReference type="GO" id="GO:0033281">
    <property type="term" value="C:TAT protein transport complex"/>
    <property type="evidence" value="ECO:0007669"/>
    <property type="project" value="UniProtKB-UniRule"/>
</dbReference>
<dbReference type="GO" id="GO:0008320">
    <property type="term" value="F:protein transmembrane transporter activity"/>
    <property type="evidence" value="ECO:0007669"/>
    <property type="project" value="UniProtKB-UniRule"/>
</dbReference>
<dbReference type="GO" id="GO:0043953">
    <property type="term" value="P:protein transport by the Tat complex"/>
    <property type="evidence" value="ECO:0007669"/>
    <property type="project" value="UniProtKB-UniRule"/>
</dbReference>
<dbReference type="Gene3D" id="1.20.5.3310">
    <property type="match status" value="1"/>
</dbReference>
<dbReference type="HAMAP" id="MF_00236">
    <property type="entry name" value="TatA_E"/>
    <property type="match status" value="1"/>
</dbReference>
<dbReference type="InterPro" id="IPR003369">
    <property type="entry name" value="TatA/B/E"/>
</dbReference>
<dbReference type="InterPro" id="IPR006312">
    <property type="entry name" value="TatA/E"/>
</dbReference>
<dbReference type="NCBIfam" id="NF002813">
    <property type="entry name" value="PRK02958.1"/>
    <property type="match status" value="1"/>
</dbReference>
<dbReference type="NCBIfam" id="TIGR01411">
    <property type="entry name" value="tatAE"/>
    <property type="match status" value="1"/>
</dbReference>
<dbReference type="PANTHER" id="PTHR42982">
    <property type="entry name" value="SEC-INDEPENDENT PROTEIN TRANSLOCASE PROTEIN TATA"/>
    <property type="match status" value="1"/>
</dbReference>
<dbReference type="PANTHER" id="PTHR42982:SF1">
    <property type="entry name" value="SEC-INDEPENDENT PROTEIN TRANSLOCASE PROTEIN TATA"/>
    <property type="match status" value="1"/>
</dbReference>
<dbReference type="Pfam" id="PF02416">
    <property type="entry name" value="TatA_B_E"/>
    <property type="match status" value="1"/>
</dbReference>
<name>TATA_SHEFN</name>
<keyword id="KW-0997">Cell inner membrane</keyword>
<keyword id="KW-1003">Cell membrane</keyword>
<keyword id="KW-0472">Membrane</keyword>
<keyword id="KW-0653">Protein transport</keyword>
<keyword id="KW-1185">Reference proteome</keyword>
<keyword id="KW-0811">Translocation</keyword>
<keyword id="KW-0812">Transmembrane</keyword>
<keyword id="KW-1133">Transmembrane helix</keyword>
<keyword id="KW-0813">Transport</keyword>
<gene>
    <name evidence="1" type="primary">tatA</name>
    <name type="ordered locus">Sfri_0472</name>
</gene>
<organism>
    <name type="scientific">Shewanella frigidimarina (strain NCIMB 400)</name>
    <dbReference type="NCBI Taxonomy" id="318167"/>
    <lineage>
        <taxon>Bacteria</taxon>
        <taxon>Pseudomonadati</taxon>
        <taxon>Pseudomonadota</taxon>
        <taxon>Gammaproteobacteria</taxon>
        <taxon>Alteromonadales</taxon>
        <taxon>Shewanellaceae</taxon>
        <taxon>Shewanella</taxon>
    </lineage>
</organism>
<feature type="chain" id="PRO_1000044441" description="Sec-independent protein translocase protein TatA">
    <location>
        <begin position="1"/>
        <end position="81"/>
    </location>
</feature>
<feature type="transmembrane region" description="Helical" evidence="1">
    <location>
        <begin position="1"/>
        <end position="21"/>
    </location>
</feature>
<feature type="region of interest" description="Disordered" evidence="2">
    <location>
        <begin position="34"/>
        <end position="81"/>
    </location>
</feature>
<feature type="compositionally biased region" description="Basic and acidic residues" evidence="2">
    <location>
        <begin position="47"/>
        <end position="59"/>
    </location>
</feature>
<feature type="compositionally biased region" description="Basic and acidic residues" evidence="2">
    <location>
        <begin position="70"/>
        <end position="81"/>
    </location>
</feature>
<reference key="1">
    <citation type="submission" date="2006-08" db="EMBL/GenBank/DDBJ databases">
        <title>Complete sequence of Shewanella frigidimarina NCIMB 400.</title>
        <authorList>
            <consortium name="US DOE Joint Genome Institute"/>
            <person name="Copeland A."/>
            <person name="Lucas S."/>
            <person name="Lapidus A."/>
            <person name="Barry K."/>
            <person name="Detter J.C."/>
            <person name="Glavina del Rio T."/>
            <person name="Hammon N."/>
            <person name="Israni S."/>
            <person name="Dalin E."/>
            <person name="Tice H."/>
            <person name="Pitluck S."/>
            <person name="Fredrickson J.K."/>
            <person name="Kolker E."/>
            <person name="McCuel L.A."/>
            <person name="DiChristina T."/>
            <person name="Nealson K.H."/>
            <person name="Newman D."/>
            <person name="Tiedje J.M."/>
            <person name="Zhou J."/>
            <person name="Romine M.F."/>
            <person name="Culley D.E."/>
            <person name="Serres M."/>
            <person name="Chertkov O."/>
            <person name="Brettin T."/>
            <person name="Bruce D."/>
            <person name="Han C."/>
            <person name="Tapia R."/>
            <person name="Gilna P."/>
            <person name="Schmutz J."/>
            <person name="Larimer F."/>
            <person name="Land M."/>
            <person name="Hauser L."/>
            <person name="Kyrpides N."/>
            <person name="Mikhailova N."/>
            <person name="Richardson P."/>
        </authorList>
    </citation>
    <scope>NUCLEOTIDE SEQUENCE [LARGE SCALE GENOMIC DNA]</scope>
    <source>
        <strain>NCIMB 400</strain>
    </source>
</reference>
<sequence length="81" mass="8703">MGGISIWQLLIVALIVILLFGTKKLRSLGGDLGGAVKGFKNAMTPEDENKSLDDKEKDQTAATSQQAAEKQPETESKDKQA</sequence>
<accession>Q088I1</accession>
<comment type="function">
    <text evidence="1">Part of the twin-arginine translocation (Tat) system that transports large folded proteins containing a characteristic twin-arginine motif in their signal peptide across membranes. TatA could form the protein-conducting channel of the Tat system.</text>
</comment>
<comment type="subunit">
    <text evidence="1">The Tat system comprises two distinct complexes: a TatABC complex, containing multiple copies of TatA, TatB and TatC subunits, and a separate TatA complex, containing only TatA subunits. Substrates initially bind to the TatABC complex, which probably triggers association of the separate TatA complex to form the active translocon.</text>
</comment>
<comment type="subcellular location">
    <subcellularLocation>
        <location evidence="1">Cell inner membrane</location>
        <topology evidence="1">Single-pass membrane protein</topology>
    </subcellularLocation>
</comment>
<comment type="similarity">
    <text evidence="1">Belongs to the TatA/E family.</text>
</comment>
<proteinExistence type="inferred from homology"/>
<protein>
    <recommendedName>
        <fullName evidence="1">Sec-independent protein translocase protein TatA</fullName>
    </recommendedName>
</protein>